<organism>
    <name type="scientific">Mycoplasma mobile (strain ATCC 43663 / 163K / NCTC 11711)</name>
    <name type="common">Mesomycoplasma mobile</name>
    <dbReference type="NCBI Taxonomy" id="267748"/>
    <lineage>
        <taxon>Bacteria</taxon>
        <taxon>Bacillati</taxon>
        <taxon>Mycoplasmatota</taxon>
        <taxon>Mycoplasmoidales</taxon>
        <taxon>Metamycoplasmataceae</taxon>
        <taxon>Mesomycoplasma</taxon>
    </lineage>
</organism>
<sequence length="381" mass="42964">MVKKEMIAMILAGGQGTRLKNLTKKIAKPAVPFGAKYRIIDFTLSNCINSGIDTVGVLTQYRPLSLLKHIGSGIPFDLNRLNGGVVLLSPYVKESEGYWYAGTAHAIFENIDFMNEYDPTYALILSGDHIYKMDYSKMLDFHKEKNANVTIATINVSFEEASRFGILNTNENNMVEEFEEKPKIPKSTKASMGVYIFNYQLLKDTFEELKSKGNNFQDFGHNILPYILKKYSKIFAYEFNGYWKDVGTISTFYEANLDLIKNHKNLDLREKNWTIFTKSSSHSPQYITSGGNVVNSLVANGAKIEGHVSNSVIFENVKIGKNTIIEDSVIMSNAIIGENSFIKKTIIMENTVVKEKMVLNSLNNQSLNEEDGIILYDGKEK</sequence>
<protein>
    <recommendedName>
        <fullName evidence="1">Glucose-1-phosphate adenylyltransferase</fullName>
        <ecNumber evidence="1">2.7.7.27</ecNumber>
    </recommendedName>
    <alternativeName>
        <fullName evidence="1">ADP-glucose pyrophosphorylase</fullName>
        <shortName evidence="1">ADPGlc PPase</shortName>
    </alternativeName>
    <alternativeName>
        <fullName evidence="1">ADP-glucose synthase</fullName>
    </alternativeName>
</protein>
<reference key="1">
    <citation type="journal article" date="2004" name="Genome Res.">
        <title>The complete genome and proteome of Mycoplasma mobile.</title>
        <authorList>
            <person name="Jaffe J.D."/>
            <person name="Stange-Thomann N."/>
            <person name="Smith C."/>
            <person name="DeCaprio D."/>
            <person name="Fisher S."/>
            <person name="Butler J."/>
            <person name="Calvo S."/>
            <person name="Elkins T."/>
            <person name="FitzGerald M.G."/>
            <person name="Hafez N."/>
            <person name="Kodira C.D."/>
            <person name="Major J."/>
            <person name="Wang S."/>
            <person name="Wilkinson J."/>
            <person name="Nicol R."/>
            <person name="Nusbaum C."/>
            <person name="Birren B."/>
            <person name="Berg H.C."/>
            <person name="Church G.M."/>
        </authorList>
    </citation>
    <scope>NUCLEOTIDE SEQUENCE [LARGE SCALE GENOMIC DNA]</scope>
    <source>
        <strain>ATCC 43663 / NCTC 11711 / 163 K</strain>
    </source>
</reference>
<accession>Q6KHP5</accession>
<proteinExistence type="inferred from homology"/>
<gene>
    <name evidence="1" type="primary">glgC</name>
    <name type="ordered locus">MMOB3990</name>
</gene>
<evidence type="ECO:0000255" key="1">
    <source>
        <dbReference type="HAMAP-Rule" id="MF_00624"/>
    </source>
</evidence>
<keyword id="KW-0067">ATP-binding</keyword>
<keyword id="KW-0119">Carbohydrate metabolism</keyword>
<keyword id="KW-0320">Glycogen biosynthesis</keyword>
<keyword id="KW-0321">Glycogen metabolism</keyword>
<keyword id="KW-0547">Nucleotide-binding</keyword>
<keyword id="KW-0548">Nucleotidyltransferase</keyword>
<keyword id="KW-1185">Reference proteome</keyword>
<keyword id="KW-0808">Transferase</keyword>
<name>GLGC_MYCM1</name>
<feature type="chain" id="PRO_0000195307" description="Glucose-1-phosphate adenylyltransferase">
    <location>
        <begin position="1"/>
        <end position="381"/>
    </location>
</feature>
<feature type="binding site" evidence="1">
    <location>
        <position position="100"/>
    </location>
    <ligand>
        <name>alpha-D-glucose 1-phosphate</name>
        <dbReference type="ChEBI" id="CHEBI:58601"/>
    </ligand>
</feature>
<feature type="binding site" evidence="1">
    <location>
        <position position="165"/>
    </location>
    <ligand>
        <name>alpha-D-glucose 1-phosphate</name>
        <dbReference type="ChEBI" id="CHEBI:58601"/>
    </ligand>
</feature>
<feature type="binding site" evidence="1">
    <location>
        <begin position="180"/>
        <end position="181"/>
    </location>
    <ligand>
        <name>alpha-D-glucose 1-phosphate</name>
        <dbReference type="ChEBI" id="CHEBI:58601"/>
    </ligand>
</feature>
<feature type="binding site" evidence="1">
    <location>
        <position position="191"/>
    </location>
    <ligand>
        <name>alpha-D-glucose 1-phosphate</name>
        <dbReference type="ChEBI" id="CHEBI:58601"/>
    </ligand>
</feature>
<comment type="function">
    <text evidence="1">Involved in the biosynthesis of ADP-glucose, a building block required for the elongation reactions to produce glycogen. Catalyzes the reaction between ATP and alpha-D-glucose 1-phosphate (G1P) to produce pyrophosphate and ADP-Glc.</text>
</comment>
<comment type="catalytic activity">
    <reaction evidence="1">
        <text>alpha-D-glucose 1-phosphate + ATP + H(+) = ADP-alpha-D-glucose + diphosphate</text>
        <dbReference type="Rhea" id="RHEA:12120"/>
        <dbReference type="ChEBI" id="CHEBI:15378"/>
        <dbReference type="ChEBI" id="CHEBI:30616"/>
        <dbReference type="ChEBI" id="CHEBI:33019"/>
        <dbReference type="ChEBI" id="CHEBI:57498"/>
        <dbReference type="ChEBI" id="CHEBI:58601"/>
        <dbReference type="EC" id="2.7.7.27"/>
    </reaction>
</comment>
<comment type="pathway">
    <text evidence="1">Glycan biosynthesis; glycogen biosynthesis.</text>
</comment>
<comment type="subunit">
    <text evidence="1">Homotetramer.</text>
</comment>
<comment type="similarity">
    <text evidence="1">Belongs to the bacterial/plant glucose-1-phosphate adenylyltransferase family.</text>
</comment>
<dbReference type="EC" id="2.7.7.27" evidence="1"/>
<dbReference type="EMBL" id="AE017308">
    <property type="protein sequence ID" value="AAT27885.1"/>
    <property type="molecule type" value="Genomic_DNA"/>
</dbReference>
<dbReference type="RefSeq" id="WP_011264919.1">
    <property type="nucleotide sequence ID" value="NC_006908.1"/>
</dbReference>
<dbReference type="SMR" id="Q6KHP5"/>
<dbReference type="STRING" id="267748.MMOB3990"/>
<dbReference type="KEGG" id="mmo:MMOB3990"/>
<dbReference type="eggNOG" id="COG0448">
    <property type="taxonomic scope" value="Bacteria"/>
</dbReference>
<dbReference type="HOGENOM" id="CLU_029499_14_0_14"/>
<dbReference type="OrthoDB" id="9801810at2"/>
<dbReference type="UniPathway" id="UPA00164"/>
<dbReference type="Proteomes" id="UP000009072">
    <property type="component" value="Chromosome"/>
</dbReference>
<dbReference type="GO" id="GO:0005524">
    <property type="term" value="F:ATP binding"/>
    <property type="evidence" value="ECO:0007669"/>
    <property type="project" value="UniProtKB-KW"/>
</dbReference>
<dbReference type="GO" id="GO:0008878">
    <property type="term" value="F:glucose-1-phosphate adenylyltransferase activity"/>
    <property type="evidence" value="ECO:0007669"/>
    <property type="project" value="UniProtKB-UniRule"/>
</dbReference>
<dbReference type="GO" id="GO:0005978">
    <property type="term" value="P:glycogen biosynthetic process"/>
    <property type="evidence" value="ECO:0007669"/>
    <property type="project" value="UniProtKB-UniRule"/>
</dbReference>
<dbReference type="CDD" id="cd02508">
    <property type="entry name" value="ADP_Glucose_PP"/>
    <property type="match status" value="1"/>
</dbReference>
<dbReference type="CDD" id="cd04651">
    <property type="entry name" value="LbH_G1P_AT_C"/>
    <property type="match status" value="1"/>
</dbReference>
<dbReference type="Gene3D" id="2.160.10.10">
    <property type="entry name" value="Hexapeptide repeat proteins"/>
    <property type="match status" value="1"/>
</dbReference>
<dbReference type="Gene3D" id="3.90.550.10">
    <property type="entry name" value="Spore Coat Polysaccharide Biosynthesis Protein SpsA, Chain A"/>
    <property type="match status" value="1"/>
</dbReference>
<dbReference type="HAMAP" id="MF_00624">
    <property type="entry name" value="GlgC"/>
    <property type="match status" value="1"/>
</dbReference>
<dbReference type="InterPro" id="IPR011831">
    <property type="entry name" value="ADP-Glc_PPase"/>
</dbReference>
<dbReference type="InterPro" id="IPR005836">
    <property type="entry name" value="ADP_Glu_pyroP_CS"/>
</dbReference>
<dbReference type="InterPro" id="IPR023049">
    <property type="entry name" value="GlgC_bac"/>
</dbReference>
<dbReference type="InterPro" id="IPR056818">
    <property type="entry name" value="GlmU/GlgC-like_hexapep"/>
</dbReference>
<dbReference type="InterPro" id="IPR005835">
    <property type="entry name" value="NTP_transferase_dom"/>
</dbReference>
<dbReference type="InterPro" id="IPR029044">
    <property type="entry name" value="Nucleotide-diphossugar_trans"/>
</dbReference>
<dbReference type="InterPro" id="IPR011004">
    <property type="entry name" value="Trimer_LpxA-like_sf"/>
</dbReference>
<dbReference type="NCBIfam" id="TIGR02091">
    <property type="entry name" value="glgC"/>
    <property type="match status" value="1"/>
</dbReference>
<dbReference type="NCBIfam" id="NF003670">
    <property type="entry name" value="PRK05293.1"/>
    <property type="match status" value="1"/>
</dbReference>
<dbReference type="PANTHER" id="PTHR43523:SF2">
    <property type="entry name" value="GLUCOSE-1-PHOSPHATE ADENYLYLTRANSFERASE"/>
    <property type="match status" value="1"/>
</dbReference>
<dbReference type="PANTHER" id="PTHR43523">
    <property type="entry name" value="GLUCOSE-1-PHOSPHATE ADENYLYLTRANSFERASE-RELATED"/>
    <property type="match status" value="1"/>
</dbReference>
<dbReference type="Pfam" id="PF24894">
    <property type="entry name" value="Hexapep_GlmU"/>
    <property type="match status" value="1"/>
</dbReference>
<dbReference type="Pfam" id="PF00483">
    <property type="entry name" value="NTP_transferase"/>
    <property type="match status" value="1"/>
</dbReference>
<dbReference type="SUPFAM" id="SSF53448">
    <property type="entry name" value="Nucleotide-diphospho-sugar transferases"/>
    <property type="match status" value="1"/>
</dbReference>
<dbReference type="SUPFAM" id="SSF51161">
    <property type="entry name" value="Trimeric LpxA-like enzymes"/>
    <property type="match status" value="1"/>
</dbReference>
<dbReference type="PROSITE" id="PS00808">
    <property type="entry name" value="ADP_GLC_PYROPHOSPH_1"/>
    <property type="match status" value="1"/>
</dbReference>
<dbReference type="PROSITE" id="PS00809">
    <property type="entry name" value="ADP_GLC_PYROPHOSPH_2"/>
    <property type="match status" value="1"/>
</dbReference>
<dbReference type="PROSITE" id="PS00810">
    <property type="entry name" value="ADP_GLC_PYROPHOSPH_3"/>
    <property type="match status" value="1"/>
</dbReference>